<keyword id="KW-0030">Aminoacyl-tRNA synthetase</keyword>
<keyword id="KW-0067">ATP-binding</keyword>
<keyword id="KW-0963">Cytoplasm</keyword>
<keyword id="KW-0436">Ligase</keyword>
<keyword id="KW-0547">Nucleotide-binding</keyword>
<keyword id="KW-0648">Protein biosynthesis</keyword>
<feature type="chain" id="PRO_1000215546" description="Proline--tRNA ligase">
    <location>
        <begin position="1"/>
        <end position="488"/>
    </location>
</feature>
<dbReference type="EC" id="6.1.1.15" evidence="1"/>
<dbReference type="EMBL" id="CP001205">
    <property type="protein sequence ID" value="ACK74687.1"/>
    <property type="molecule type" value="Genomic_DNA"/>
</dbReference>
<dbReference type="RefSeq" id="WP_002657866.1">
    <property type="nucleotide sequence ID" value="NC_011728.1"/>
</dbReference>
<dbReference type="SMR" id="B7J1X2"/>
<dbReference type="GeneID" id="56567832"/>
<dbReference type="KEGG" id="bbz:BbuZS7_0405"/>
<dbReference type="HOGENOM" id="CLU_001882_4_2_12"/>
<dbReference type="Proteomes" id="UP000006901">
    <property type="component" value="Chromosome"/>
</dbReference>
<dbReference type="GO" id="GO:0017101">
    <property type="term" value="C:aminoacyl-tRNA synthetase multienzyme complex"/>
    <property type="evidence" value="ECO:0007669"/>
    <property type="project" value="TreeGrafter"/>
</dbReference>
<dbReference type="GO" id="GO:0005737">
    <property type="term" value="C:cytoplasm"/>
    <property type="evidence" value="ECO:0007669"/>
    <property type="project" value="UniProtKB-SubCell"/>
</dbReference>
<dbReference type="GO" id="GO:0005524">
    <property type="term" value="F:ATP binding"/>
    <property type="evidence" value="ECO:0007669"/>
    <property type="project" value="UniProtKB-UniRule"/>
</dbReference>
<dbReference type="GO" id="GO:0004827">
    <property type="term" value="F:proline-tRNA ligase activity"/>
    <property type="evidence" value="ECO:0007669"/>
    <property type="project" value="UniProtKB-UniRule"/>
</dbReference>
<dbReference type="GO" id="GO:0006433">
    <property type="term" value="P:prolyl-tRNA aminoacylation"/>
    <property type="evidence" value="ECO:0007669"/>
    <property type="project" value="UniProtKB-UniRule"/>
</dbReference>
<dbReference type="CDD" id="cd00862">
    <property type="entry name" value="ProRS_anticodon_zinc"/>
    <property type="match status" value="1"/>
</dbReference>
<dbReference type="CDD" id="cd00778">
    <property type="entry name" value="ProRS_core_arch_euk"/>
    <property type="match status" value="1"/>
</dbReference>
<dbReference type="FunFam" id="3.30.930.10:FF:000023">
    <property type="entry name" value="Proline--tRNA ligase"/>
    <property type="match status" value="1"/>
</dbReference>
<dbReference type="Gene3D" id="3.40.50.800">
    <property type="entry name" value="Anticodon-binding domain"/>
    <property type="match status" value="1"/>
</dbReference>
<dbReference type="Gene3D" id="3.30.930.10">
    <property type="entry name" value="Bira Bifunctional Protein, Domain 2"/>
    <property type="match status" value="1"/>
</dbReference>
<dbReference type="Gene3D" id="3.30.110.30">
    <property type="entry name" value="C-terminal domain of ProRS"/>
    <property type="match status" value="1"/>
</dbReference>
<dbReference type="HAMAP" id="MF_01571">
    <property type="entry name" value="Pro_tRNA_synth_type3"/>
    <property type="match status" value="1"/>
</dbReference>
<dbReference type="InterPro" id="IPR002314">
    <property type="entry name" value="aa-tRNA-synt_IIb"/>
</dbReference>
<dbReference type="InterPro" id="IPR006195">
    <property type="entry name" value="aa-tRNA-synth_II"/>
</dbReference>
<dbReference type="InterPro" id="IPR045864">
    <property type="entry name" value="aa-tRNA-synth_II/BPL/LPL"/>
</dbReference>
<dbReference type="InterPro" id="IPR004154">
    <property type="entry name" value="Anticodon-bd"/>
</dbReference>
<dbReference type="InterPro" id="IPR036621">
    <property type="entry name" value="Anticodon-bd_dom_sf"/>
</dbReference>
<dbReference type="InterPro" id="IPR002316">
    <property type="entry name" value="Pro-tRNA-ligase_IIa"/>
</dbReference>
<dbReference type="InterPro" id="IPR004499">
    <property type="entry name" value="Pro-tRNA-ligase_IIa_arc-type"/>
</dbReference>
<dbReference type="InterPro" id="IPR016061">
    <property type="entry name" value="Pro-tRNA_ligase_II_C"/>
</dbReference>
<dbReference type="InterPro" id="IPR017449">
    <property type="entry name" value="Pro-tRNA_synth_II"/>
</dbReference>
<dbReference type="InterPro" id="IPR033721">
    <property type="entry name" value="ProRS_core_arch_euk"/>
</dbReference>
<dbReference type="NCBIfam" id="TIGR00408">
    <property type="entry name" value="proS_fam_I"/>
    <property type="match status" value="1"/>
</dbReference>
<dbReference type="PANTHER" id="PTHR43382:SF2">
    <property type="entry name" value="BIFUNCTIONAL GLUTAMATE_PROLINE--TRNA LIGASE"/>
    <property type="match status" value="1"/>
</dbReference>
<dbReference type="PANTHER" id="PTHR43382">
    <property type="entry name" value="PROLYL-TRNA SYNTHETASE"/>
    <property type="match status" value="1"/>
</dbReference>
<dbReference type="Pfam" id="PF03129">
    <property type="entry name" value="HGTP_anticodon"/>
    <property type="match status" value="1"/>
</dbReference>
<dbReference type="Pfam" id="PF09180">
    <property type="entry name" value="ProRS-C_1"/>
    <property type="match status" value="1"/>
</dbReference>
<dbReference type="Pfam" id="PF00587">
    <property type="entry name" value="tRNA-synt_2b"/>
    <property type="match status" value="1"/>
</dbReference>
<dbReference type="PRINTS" id="PR01046">
    <property type="entry name" value="TRNASYNTHPRO"/>
</dbReference>
<dbReference type="SMART" id="SM00946">
    <property type="entry name" value="ProRS-C_1"/>
    <property type="match status" value="1"/>
</dbReference>
<dbReference type="SUPFAM" id="SSF64586">
    <property type="entry name" value="C-terminal domain of ProRS"/>
    <property type="match status" value="1"/>
</dbReference>
<dbReference type="SUPFAM" id="SSF52954">
    <property type="entry name" value="Class II aaRS ABD-related"/>
    <property type="match status" value="1"/>
</dbReference>
<dbReference type="SUPFAM" id="SSF55681">
    <property type="entry name" value="Class II aaRS and biotin synthetases"/>
    <property type="match status" value="1"/>
</dbReference>
<dbReference type="PROSITE" id="PS50862">
    <property type="entry name" value="AA_TRNA_LIGASE_II"/>
    <property type="match status" value="1"/>
</dbReference>
<sequence>MSDFIASKEDDYSKWYLDIVQKAKLADYSPVKGCMVIMPYGYSIWSKIQSILDKKFKETGHENAYFPMLIPYSFLEREKDHIDGFSPEFAIIKDAGGESLAEPLVLRPTSETIIWNMYSKWIKSYRDLPLKINQWANVVRWEKRTRPFLRTTEFLWQEGHTAHATEEEALEETLLILDVYKRFIEDYLAIPVFCGKKSEKEKFAGAVSTYSIEALMQDKKALQAATSHYLGLNFAKAFDVKFQDKDGKMRHVFASSWGVSTRLIGALIMVHSDEKGLVLPPRIAPIEIIVIPIFKKEDEINKKILDYCDCVVDALKKAGFRVEIDKDVRSSPGFRFSSAEFKGIPIRLEVGINDVLLNSVTISRRDKDRKFKYQISLDSLVSKVKVELDLMQKDLFQRALNFRILNTKEIFRSSKDSYETFKAYVNDYSGFVLSCWCGSLNCENIIKNETKATIRCIPDDFKARDLTGMTCIYCSSKAKYFVLFAKSY</sequence>
<proteinExistence type="inferred from homology"/>
<protein>
    <recommendedName>
        <fullName evidence="1">Proline--tRNA ligase</fullName>
        <ecNumber evidence="1">6.1.1.15</ecNumber>
    </recommendedName>
    <alternativeName>
        <fullName evidence="1">Prolyl-tRNA synthetase</fullName>
        <shortName evidence="1">ProRS</shortName>
    </alternativeName>
</protein>
<accession>B7J1X2</accession>
<gene>
    <name evidence="1" type="primary">proS</name>
    <name type="ordered locus">BbuZS7_0405</name>
</gene>
<name>SYP_BORBZ</name>
<evidence type="ECO:0000255" key="1">
    <source>
        <dbReference type="HAMAP-Rule" id="MF_01571"/>
    </source>
</evidence>
<organism>
    <name type="scientific">Borreliella burgdorferi (strain ZS7)</name>
    <name type="common">Borrelia burgdorferi</name>
    <dbReference type="NCBI Taxonomy" id="445985"/>
    <lineage>
        <taxon>Bacteria</taxon>
        <taxon>Pseudomonadati</taxon>
        <taxon>Spirochaetota</taxon>
        <taxon>Spirochaetia</taxon>
        <taxon>Spirochaetales</taxon>
        <taxon>Borreliaceae</taxon>
        <taxon>Borreliella</taxon>
    </lineage>
</organism>
<reference key="1">
    <citation type="journal article" date="2011" name="J. Bacteriol.">
        <title>Whole-genome sequences of thirteen isolates of Borrelia burgdorferi.</title>
        <authorList>
            <person name="Schutzer S.E."/>
            <person name="Fraser-Liggett C.M."/>
            <person name="Casjens S.R."/>
            <person name="Qiu W.G."/>
            <person name="Dunn J.J."/>
            <person name="Mongodin E.F."/>
            <person name="Luft B.J."/>
        </authorList>
    </citation>
    <scope>NUCLEOTIDE SEQUENCE [LARGE SCALE GENOMIC DNA]</scope>
    <source>
        <strain>ZS7</strain>
    </source>
</reference>
<comment type="function">
    <text evidence="1">Catalyzes the attachment of proline to tRNA(Pro) in a two-step reaction: proline is first activated by ATP to form Pro-AMP and then transferred to the acceptor end of tRNA(Pro).</text>
</comment>
<comment type="catalytic activity">
    <reaction evidence="1">
        <text>tRNA(Pro) + L-proline + ATP = L-prolyl-tRNA(Pro) + AMP + diphosphate</text>
        <dbReference type="Rhea" id="RHEA:14305"/>
        <dbReference type="Rhea" id="RHEA-COMP:9700"/>
        <dbReference type="Rhea" id="RHEA-COMP:9702"/>
        <dbReference type="ChEBI" id="CHEBI:30616"/>
        <dbReference type="ChEBI" id="CHEBI:33019"/>
        <dbReference type="ChEBI" id="CHEBI:60039"/>
        <dbReference type="ChEBI" id="CHEBI:78442"/>
        <dbReference type="ChEBI" id="CHEBI:78532"/>
        <dbReference type="ChEBI" id="CHEBI:456215"/>
        <dbReference type="EC" id="6.1.1.15"/>
    </reaction>
</comment>
<comment type="subunit">
    <text evidence="1">Homodimer.</text>
</comment>
<comment type="subcellular location">
    <subcellularLocation>
        <location evidence="1">Cytoplasm</location>
    </subcellularLocation>
</comment>
<comment type="domain">
    <text evidence="1">Consists of three domains: the N-terminal catalytic domain, the anticodon-binding domain and the C-terminal extension.</text>
</comment>
<comment type="similarity">
    <text evidence="1">Belongs to the class-II aminoacyl-tRNA synthetase family. ProS type 3 subfamily.</text>
</comment>